<protein>
    <recommendedName>
        <fullName>Pre-mRNA-splicing factor slt-11</fullName>
    </recommendedName>
</protein>
<dbReference type="EMBL" id="AL389890">
    <property type="protein sequence ID" value="CAB97290.2"/>
    <property type="status" value="ALT_INIT"/>
    <property type="molecule type" value="Genomic_DNA"/>
</dbReference>
<dbReference type="EMBL" id="CM002236">
    <property type="protein sequence ID" value="EAA36157.2"/>
    <property type="molecule type" value="Genomic_DNA"/>
</dbReference>
<dbReference type="RefSeq" id="XP_965393.2">
    <property type="nucleotide sequence ID" value="XM_960300.3"/>
</dbReference>
<dbReference type="SMR" id="Q7RUX3"/>
<dbReference type="FunCoup" id="Q7RUX3">
    <property type="interactions" value="112"/>
</dbReference>
<dbReference type="STRING" id="367110.Q7RUX3"/>
<dbReference type="PaxDb" id="5141-EFNCRP00000002305"/>
<dbReference type="EnsemblFungi" id="EAA36157">
    <property type="protein sequence ID" value="EAA36157"/>
    <property type="gene ID" value="NCU03007"/>
</dbReference>
<dbReference type="GeneID" id="3881543"/>
<dbReference type="KEGG" id="ncr:NCU03007"/>
<dbReference type="VEuPathDB" id="FungiDB:NCU03007"/>
<dbReference type="HOGENOM" id="CLU_027112_1_0_1"/>
<dbReference type="InParanoid" id="Q7RUX3"/>
<dbReference type="OMA" id="CPLRVQW"/>
<dbReference type="OrthoDB" id="10259600at2759"/>
<dbReference type="Proteomes" id="UP000001805">
    <property type="component" value="Chromosome 1, Linkage Group I"/>
</dbReference>
<dbReference type="GO" id="GO:0071014">
    <property type="term" value="C:post-mRNA release spliceosomal complex"/>
    <property type="evidence" value="ECO:0007669"/>
    <property type="project" value="EnsemblFungi"/>
</dbReference>
<dbReference type="GO" id="GO:0000974">
    <property type="term" value="C:Prp19 complex"/>
    <property type="evidence" value="ECO:0000318"/>
    <property type="project" value="GO_Central"/>
</dbReference>
<dbReference type="GO" id="GO:0071006">
    <property type="term" value="C:U2-type catalytic step 1 spliceosome"/>
    <property type="evidence" value="ECO:0000318"/>
    <property type="project" value="GO_Central"/>
</dbReference>
<dbReference type="GO" id="GO:0071007">
    <property type="term" value="C:U2-type catalytic step 2 spliceosome"/>
    <property type="evidence" value="ECO:0000318"/>
    <property type="project" value="GO_Central"/>
</dbReference>
<dbReference type="GO" id="GO:0036002">
    <property type="term" value="F:pre-mRNA binding"/>
    <property type="evidence" value="ECO:0000318"/>
    <property type="project" value="GO_Central"/>
</dbReference>
<dbReference type="GO" id="GO:0017070">
    <property type="term" value="F:U6 snRNA binding"/>
    <property type="evidence" value="ECO:0000318"/>
    <property type="project" value="GO_Central"/>
</dbReference>
<dbReference type="GO" id="GO:0006397">
    <property type="term" value="P:mRNA processing"/>
    <property type="evidence" value="ECO:0007669"/>
    <property type="project" value="UniProtKB-KW"/>
</dbReference>
<dbReference type="GO" id="GO:0008380">
    <property type="term" value="P:RNA splicing"/>
    <property type="evidence" value="ECO:0007669"/>
    <property type="project" value="UniProtKB-KW"/>
</dbReference>
<dbReference type="CDD" id="cd12265">
    <property type="entry name" value="RRM_SLT11"/>
    <property type="match status" value="1"/>
</dbReference>
<dbReference type="FunFam" id="3.30.70.330:FF:000396">
    <property type="entry name" value="Putative Pre-mRNA-splicing factor slt11"/>
    <property type="match status" value="1"/>
</dbReference>
<dbReference type="Gene3D" id="3.30.70.330">
    <property type="match status" value="1"/>
</dbReference>
<dbReference type="InterPro" id="IPR039171">
    <property type="entry name" value="Cwc2/Slt11"/>
</dbReference>
<dbReference type="InterPro" id="IPR012677">
    <property type="entry name" value="Nucleotide-bd_a/b_plait_sf"/>
</dbReference>
<dbReference type="InterPro" id="IPR035979">
    <property type="entry name" value="RBD_domain_sf"/>
</dbReference>
<dbReference type="InterPro" id="IPR000504">
    <property type="entry name" value="RRM_dom"/>
</dbReference>
<dbReference type="InterPro" id="IPR034356">
    <property type="entry name" value="Slt11_RRM"/>
</dbReference>
<dbReference type="InterPro" id="IPR048995">
    <property type="entry name" value="STL11/RBM22-like_N"/>
</dbReference>
<dbReference type="PANTHER" id="PTHR14089">
    <property type="entry name" value="PRE-MRNA-SPLICING FACTOR RBM22"/>
    <property type="match status" value="1"/>
</dbReference>
<dbReference type="PANTHER" id="PTHR14089:SF6">
    <property type="entry name" value="PRE-MRNA-SPLICING FACTOR RBM22"/>
    <property type="match status" value="1"/>
</dbReference>
<dbReference type="Pfam" id="PF00076">
    <property type="entry name" value="RRM_1"/>
    <property type="match status" value="1"/>
</dbReference>
<dbReference type="Pfam" id="PF21369">
    <property type="entry name" value="STL11_N"/>
    <property type="match status" value="1"/>
</dbReference>
<dbReference type="SMART" id="SM00360">
    <property type="entry name" value="RRM"/>
    <property type="match status" value="1"/>
</dbReference>
<dbReference type="SUPFAM" id="SSF54928">
    <property type="entry name" value="RNA-binding domain, RBD"/>
    <property type="match status" value="1"/>
</dbReference>
<dbReference type="PROSITE" id="PS50102">
    <property type="entry name" value="RRM"/>
    <property type="match status" value="1"/>
</dbReference>
<organism>
    <name type="scientific">Neurospora crassa (strain ATCC 24698 / 74-OR23-1A / CBS 708.71 / DSM 1257 / FGSC 987)</name>
    <dbReference type="NCBI Taxonomy" id="367110"/>
    <lineage>
        <taxon>Eukaryota</taxon>
        <taxon>Fungi</taxon>
        <taxon>Dikarya</taxon>
        <taxon>Ascomycota</taxon>
        <taxon>Pezizomycotina</taxon>
        <taxon>Sordariomycetes</taxon>
        <taxon>Sordariomycetidae</taxon>
        <taxon>Sordariales</taxon>
        <taxon>Sordariaceae</taxon>
        <taxon>Neurospora</taxon>
    </lineage>
</organism>
<accession>Q7RUX3</accession>
<accession>Q9P3R0</accession>
<name>SLT11_NEUCR</name>
<sequence>MPPQIKHDLNRSGWEATDFPSVCENCLPENPYVKMLKEDYGAECKLCTRPFTVFSWAADRAHARKKRTNICLTCARLKNACQCCILDLQFGLPIIIRDKALELVAPGPQSEINREYFAQNNERAIEEGRAGVEEYEKADEKARELLRRLAQSKPYFRKGREVDEEGNPVNGSSSGAGRATGGNPAVGAGVGGVGPIRTRDSRAAAAAGARPGGGRRPNAAPAPPPGPKDWLPPADKSIMSLFVTGIEDDLPEFKIRDFFKAFGKIKSLVVSHMSHAAFVNYETREAAEKASAECKGRAVIAGCPLRVRWSVPKALGTMNKEQRSEMLRDGRSAFGSGQKTGGQKAIGGQNAQGGASGAQKDDASNLTIAAPPGAADVQYASLSGN</sequence>
<reference key="1">
    <citation type="journal article" date="2003" name="Nucleic Acids Res.">
        <title>What's in the genome of a filamentous fungus? Analysis of the Neurospora genome sequence.</title>
        <authorList>
            <person name="Mannhaupt G."/>
            <person name="Montrone C."/>
            <person name="Haase D."/>
            <person name="Mewes H.-W."/>
            <person name="Aign V."/>
            <person name="Hoheisel J.D."/>
            <person name="Fartmann B."/>
            <person name="Nyakatura G."/>
            <person name="Kempken F."/>
            <person name="Maier J."/>
            <person name="Schulte U."/>
        </authorList>
    </citation>
    <scope>NUCLEOTIDE SEQUENCE [LARGE SCALE GENOMIC DNA]</scope>
    <source>
        <strain>ATCC 24698 / 74-OR23-1A / CBS 708.71 / DSM 1257 / FGSC 987</strain>
    </source>
</reference>
<reference key="2">
    <citation type="journal article" date="2003" name="Nature">
        <title>The genome sequence of the filamentous fungus Neurospora crassa.</title>
        <authorList>
            <person name="Galagan J.E."/>
            <person name="Calvo S.E."/>
            <person name="Borkovich K.A."/>
            <person name="Selker E.U."/>
            <person name="Read N.D."/>
            <person name="Jaffe D.B."/>
            <person name="FitzHugh W."/>
            <person name="Ma L.-J."/>
            <person name="Smirnov S."/>
            <person name="Purcell S."/>
            <person name="Rehman B."/>
            <person name="Elkins T."/>
            <person name="Engels R."/>
            <person name="Wang S."/>
            <person name="Nielsen C.B."/>
            <person name="Butler J."/>
            <person name="Endrizzi M."/>
            <person name="Qui D."/>
            <person name="Ianakiev P."/>
            <person name="Bell-Pedersen D."/>
            <person name="Nelson M.A."/>
            <person name="Werner-Washburne M."/>
            <person name="Selitrennikoff C.P."/>
            <person name="Kinsey J.A."/>
            <person name="Braun E.L."/>
            <person name="Zelter A."/>
            <person name="Schulte U."/>
            <person name="Kothe G.O."/>
            <person name="Jedd G."/>
            <person name="Mewes H.-W."/>
            <person name="Staben C."/>
            <person name="Marcotte E."/>
            <person name="Greenberg D."/>
            <person name="Roy A."/>
            <person name="Foley K."/>
            <person name="Naylor J."/>
            <person name="Stange-Thomann N."/>
            <person name="Barrett R."/>
            <person name="Gnerre S."/>
            <person name="Kamal M."/>
            <person name="Kamvysselis M."/>
            <person name="Mauceli E.W."/>
            <person name="Bielke C."/>
            <person name="Rudd S."/>
            <person name="Frishman D."/>
            <person name="Krystofova S."/>
            <person name="Rasmussen C."/>
            <person name="Metzenberg R.L."/>
            <person name="Perkins D.D."/>
            <person name="Kroken S."/>
            <person name="Cogoni C."/>
            <person name="Macino G."/>
            <person name="Catcheside D.E.A."/>
            <person name="Li W."/>
            <person name="Pratt R.J."/>
            <person name="Osmani S.A."/>
            <person name="DeSouza C.P.C."/>
            <person name="Glass N.L."/>
            <person name="Orbach M.J."/>
            <person name="Berglund J.A."/>
            <person name="Voelker R."/>
            <person name="Yarden O."/>
            <person name="Plamann M."/>
            <person name="Seiler S."/>
            <person name="Dunlap J.C."/>
            <person name="Radford A."/>
            <person name="Aramayo R."/>
            <person name="Natvig D.O."/>
            <person name="Alex L.A."/>
            <person name="Mannhaupt G."/>
            <person name="Ebbole D.J."/>
            <person name="Freitag M."/>
            <person name="Paulsen I."/>
            <person name="Sachs M.S."/>
            <person name="Lander E.S."/>
            <person name="Nusbaum C."/>
            <person name="Birren B.W."/>
        </authorList>
    </citation>
    <scope>NUCLEOTIDE SEQUENCE [LARGE SCALE GENOMIC DNA]</scope>
    <source>
        <strain>ATCC 24698 / 74-OR23-1A / CBS 708.71 / DSM 1257 / FGSC 987</strain>
    </source>
</reference>
<comment type="function">
    <text evidence="1">Involved in pre-mRNA splicing. Facilitates the cooperative formation of U2/U6 helix II in association with stem II in the spliceosome. Binds to RNA (By similarity).</text>
</comment>
<comment type="subunit">
    <text evidence="1">Associated with the spliceosome.</text>
</comment>
<comment type="subcellular location">
    <subcellularLocation>
        <location evidence="1">Nucleus</location>
    </subcellularLocation>
</comment>
<comment type="similarity">
    <text evidence="4">Belongs to the SLT11 family.</text>
</comment>
<comment type="sequence caution" evidence="4">
    <conflict type="erroneous initiation">
        <sequence resource="EMBL-CDS" id="CAB97290"/>
    </conflict>
</comment>
<gene>
    <name type="primary">slt-11</name>
    <name type="ORF">B24P7.250</name>
    <name type="ORF">NCU03007</name>
</gene>
<keyword id="KW-0507">mRNA processing</keyword>
<keyword id="KW-0508">mRNA splicing</keyword>
<keyword id="KW-0539">Nucleus</keyword>
<keyword id="KW-1185">Reference proteome</keyword>
<keyword id="KW-0694">RNA-binding</keyword>
<keyword id="KW-0747">Spliceosome</keyword>
<feature type="chain" id="PRO_0000212429" description="Pre-mRNA-splicing factor slt-11">
    <location>
        <begin position="1"/>
        <end position="385"/>
    </location>
</feature>
<feature type="domain" description="RRM" evidence="2">
    <location>
        <begin position="239"/>
        <end position="312"/>
    </location>
</feature>
<feature type="region of interest" description="Disordered" evidence="3">
    <location>
        <begin position="157"/>
        <end position="233"/>
    </location>
</feature>
<feature type="region of interest" description="Disordered" evidence="3">
    <location>
        <begin position="320"/>
        <end position="370"/>
    </location>
</feature>
<feature type="compositionally biased region" description="Low complexity" evidence="3">
    <location>
        <begin position="171"/>
        <end position="187"/>
    </location>
</feature>
<feature type="compositionally biased region" description="Basic and acidic residues" evidence="3">
    <location>
        <begin position="320"/>
        <end position="331"/>
    </location>
</feature>
<evidence type="ECO:0000250" key="1"/>
<evidence type="ECO:0000255" key="2">
    <source>
        <dbReference type="PROSITE-ProRule" id="PRU00176"/>
    </source>
</evidence>
<evidence type="ECO:0000256" key="3">
    <source>
        <dbReference type="SAM" id="MobiDB-lite"/>
    </source>
</evidence>
<evidence type="ECO:0000305" key="4"/>
<proteinExistence type="inferred from homology"/>